<evidence type="ECO:0000255" key="1">
    <source>
        <dbReference type="HAMAP-Rule" id="MF_00917"/>
    </source>
</evidence>
<evidence type="ECO:0000255" key="2">
    <source>
        <dbReference type="PROSITE-ProRule" id="PRU01266"/>
    </source>
</evidence>
<comment type="function">
    <text evidence="1">Catalyzes the complex heterocyclic radical-mediated conversion of 6-carboxy-5,6,7,8-tetrahydropterin (CPH4) to 7-carboxy-7-deazaguanine (CDG), a step common to the biosynthetic pathways of all 7-deazapurine-containing compounds.</text>
</comment>
<comment type="catalytic activity">
    <reaction evidence="1">
        <text>6-carboxy-5,6,7,8-tetrahydropterin + H(+) = 7-carboxy-7-deazaguanine + NH4(+)</text>
        <dbReference type="Rhea" id="RHEA:27974"/>
        <dbReference type="ChEBI" id="CHEBI:15378"/>
        <dbReference type="ChEBI" id="CHEBI:28938"/>
        <dbReference type="ChEBI" id="CHEBI:61032"/>
        <dbReference type="ChEBI" id="CHEBI:61036"/>
        <dbReference type="EC" id="4.3.99.3"/>
    </reaction>
</comment>
<comment type="cofactor">
    <cofactor evidence="1">
        <name>[4Fe-4S] cluster</name>
        <dbReference type="ChEBI" id="CHEBI:49883"/>
    </cofactor>
    <text evidence="1">Binds 1 [4Fe-4S] cluster. The cluster is coordinated with 3 cysteines and an exchangeable S-adenosyl-L-methionine.</text>
</comment>
<comment type="cofactor">
    <cofactor evidence="1">
        <name>S-adenosyl-L-methionine</name>
        <dbReference type="ChEBI" id="CHEBI:59789"/>
    </cofactor>
    <text evidence="1">Binds 1 S-adenosyl-L-methionine per subunit.</text>
</comment>
<comment type="cofactor">
    <cofactor evidence="1">
        <name>Mg(2+)</name>
        <dbReference type="ChEBI" id="CHEBI:18420"/>
    </cofactor>
</comment>
<comment type="pathway">
    <text evidence="1">Purine metabolism; 7-cyano-7-deazaguanine biosynthesis.</text>
</comment>
<comment type="subunit">
    <text evidence="1">Homodimer.</text>
</comment>
<comment type="similarity">
    <text evidence="1">Belongs to the radical SAM superfamily. 7-carboxy-7-deazaguanine synthase family.</text>
</comment>
<reference key="1">
    <citation type="journal article" date="2003" name="Nature">
        <title>Unique physiological and pathogenic features of Leptospira interrogans revealed by whole-genome sequencing.</title>
        <authorList>
            <person name="Ren S.-X."/>
            <person name="Fu G."/>
            <person name="Jiang X.-G."/>
            <person name="Zeng R."/>
            <person name="Miao Y.-G."/>
            <person name="Xu H."/>
            <person name="Zhang Y.-X."/>
            <person name="Xiong H."/>
            <person name="Lu G."/>
            <person name="Lu L.-F."/>
            <person name="Jiang H.-Q."/>
            <person name="Jia J."/>
            <person name="Tu Y.-F."/>
            <person name="Jiang J.-X."/>
            <person name="Gu W.-Y."/>
            <person name="Zhang Y.-Q."/>
            <person name="Cai Z."/>
            <person name="Sheng H.-H."/>
            <person name="Yin H.-F."/>
            <person name="Zhang Y."/>
            <person name="Zhu G.-F."/>
            <person name="Wan M."/>
            <person name="Huang H.-L."/>
            <person name="Qian Z."/>
            <person name="Wang S.-Y."/>
            <person name="Ma W."/>
            <person name="Yao Z.-J."/>
            <person name="Shen Y."/>
            <person name="Qiang B.-Q."/>
            <person name="Xia Q.-C."/>
            <person name="Guo X.-K."/>
            <person name="Danchin A."/>
            <person name="Saint Girons I."/>
            <person name="Somerville R.L."/>
            <person name="Wen Y.-M."/>
            <person name="Shi M.-H."/>
            <person name="Chen Z."/>
            <person name="Xu J.-G."/>
            <person name="Zhao G.-P."/>
        </authorList>
    </citation>
    <scope>NUCLEOTIDE SEQUENCE [LARGE SCALE GENOMIC DNA]</scope>
    <source>
        <strain>56601</strain>
    </source>
</reference>
<gene>
    <name evidence="1" type="primary">queE</name>
    <name type="ordered locus">LA_4037</name>
</gene>
<protein>
    <recommendedName>
        <fullName evidence="1">7-carboxy-7-deazaguanine synthase</fullName>
        <shortName evidence="1">CDG synthase</shortName>
        <ecNumber evidence="1">4.3.99.3</ecNumber>
    </recommendedName>
    <alternativeName>
        <fullName evidence="1">Queuosine biosynthesis protein QueE</fullName>
    </alternativeName>
</protein>
<feature type="chain" id="PRO_0000416208" description="7-carboxy-7-deazaguanine synthase">
    <location>
        <begin position="1"/>
        <end position="237"/>
    </location>
</feature>
<feature type="domain" description="Radical SAM core" evidence="2">
    <location>
        <begin position="21"/>
        <end position="233"/>
    </location>
</feature>
<feature type="binding site" evidence="1">
    <location>
        <begin position="15"/>
        <end position="17"/>
    </location>
    <ligand>
        <name>substrate</name>
    </ligand>
</feature>
<feature type="binding site" evidence="1">
    <location>
        <position position="30"/>
    </location>
    <ligand>
        <name>substrate</name>
    </ligand>
</feature>
<feature type="binding site" evidence="1">
    <location>
        <position position="34"/>
    </location>
    <ligand>
        <name>[4Fe-4S] cluster</name>
        <dbReference type="ChEBI" id="CHEBI:49883"/>
        <note>4Fe-4S-S-AdoMet</note>
    </ligand>
</feature>
<feature type="binding site" evidence="1">
    <location>
        <position position="38"/>
    </location>
    <ligand>
        <name>[4Fe-4S] cluster</name>
        <dbReference type="ChEBI" id="CHEBI:49883"/>
        <note>4Fe-4S-S-AdoMet</note>
    </ligand>
</feature>
<feature type="binding site" evidence="1">
    <location>
        <position position="48"/>
    </location>
    <ligand>
        <name>[4Fe-4S] cluster</name>
        <dbReference type="ChEBI" id="CHEBI:49883"/>
        <note>4Fe-4S-S-AdoMet</note>
    </ligand>
</feature>
<feature type="binding site" evidence="1">
    <location>
        <position position="50"/>
    </location>
    <ligand>
        <name>Mg(2+)</name>
        <dbReference type="ChEBI" id="CHEBI:18420"/>
    </ligand>
</feature>
<feature type="binding site" evidence="1">
    <location>
        <position position="84"/>
    </location>
    <ligand>
        <name>substrate</name>
    </ligand>
</feature>
<feature type="binding site" evidence="1">
    <location>
        <position position="86"/>
    </location>
    <ligand>
        <name>S-adenosyl-L-methionine</name>
        <dbReference type="ChEBI" id="CHEBI:59789"/>
    </ligand>
</feature>
<name>QUEE_LEPIN</name>
<keyword id="KW-0004">4Fe-4S</keyword>
<keyword id="KW-0408">Iron</keyword>
<keyword id="KW-0411">Iron-sulfur</keyword>
<keyword id="KW-0456">Lyase</keyword>
<keyword id="KW-0460">Magnesium</keyword>
<keyword id="KW-0479">Metal-binding</keyword>
<keyword id="KW-0671">Queuosine biosynthesis</keyword>
<keyword id="KW-1185">Reference proteome</keyword>
<keyword id="KW-0949">S-adenosyl-L-methionine</keyword>
<dbReference type="EC" id="4.3.99.3" evidence="1"/>
<dbReference type="EMBL" id="AE010300">
    <property type="protein sequence ID" value="AAN51235.2"/>
    <property type="molecule type" value="Genomic_DNA"/>
</dbReference>
<dbReference type="RefSeq" id="NP_714217.2">
    <property type="nucleotide sequence ID" value="NC_004342.2"/>
</dbReference>
<dbReference type="RefSeq" id="WP_000369357.1">
    <property type="nucleotide sequence ID" value="NC_004342.2"/>
</dbReference>
<dbReference type="SMR" id="Q8EZ24"/>
<dbReference type="FunCoup" id="Q8EZ24">
    <property type="interactions" value="102"/>
</dbReference>
<dbReference type="STRING" id="189518.LA_4037"/>
<dbReference type="PaxDb" id="189518-LA_4037"/>
<dbReference type="EnsemblBacteria" id="AAN51235">
    <property type="protein sequence ID" value="AAN51235"/>
    <property type="gene ID" value="LA_4037"/>
</dbReference>
<dbReference type="KEGG" id="lil:LA_4037"/>
<dbReference type="PATRIC" id="fig|189518.3.peg.4004"/>
<dbReference type="HOGENOM" id="CLU_066739_2_0_12"/>
<dbReference type="InParanoid" id="Q8EZ24"/>
<dbReference type="OrthoDB" id="9792276at2"/>
<dbReference type="UniPathway" id="UPA00391"/>
<dbReference type="Proteomes" id="UP000001408">
    <property type="component" value="Chromosome I"/>
</dbReference>
<dbReference type="GO" id="GO:0051539">
    <property type="term" value="F:4 iron, 4 sulfur cluster binding"/>
    <property type="evidence" value="ECO:0007669"/>
    <property type="project" value="UniProtKB-UniRule"/>
</dbReference>
<dbReference type="GO" id="GO:0016840">
    <property type="term" value="F:carbon-nitrogen lyase activity"/>
    <property type="evidence" value="ECO:0007669"/>
    <property type="project" value="UniProtKB-UniRule"/>
</dbReference>
<dbReference type="GO" id="GO:0000287">
    <property type="term" value="F:magnesium ion binding"/>
    <property type="evidence" value="ECO:0007669"/>
    <property type="project" value="UniProtKB-UniRule"/>
</dbReference>
<dbReference type="GO" id="GO:1904047">
    <property type="term" value="F:S-adenosyl-L-methionine binding"/>
    <property type="evidence" value="ECO:0007669"/>
    <property type="project" value="UniProtKB-UniRule"/>
</dbReference>
<dbReference type="GO" id="GO:0008616">
    <property type="term" value="P:queuosine biosynthetic process"/>
    <property type="evidence" value="ECO:0007669"/>
    <property type="project" value="UniProtKB-UniRule"/>
</dbReference>
<dbReference type="Gene3D" id="3.20.20.70">
    <property type="entry name" value="Aldolase class I"/>
    <property type="match status" value="1"/>
</dbReference>
<dbReference type="HAMAP" id="MF_00917">
    <property type="entry name" value="QueE"/>
    <property type="match status" value="1"/>
</dbReference>
<dbReference type="InterPro" id="IPR024924">
    <property type="entry name" value="7-CO-7-deazaguanine_synth-like"/>
</dbReference>
<dbReference type="InterPro" id="IPR013785">
    <property type="entry name" value="Aldolase_TIM"/>
</dbReference>
<dbReference type="InterPro" id="IPR007197">
    <property type="entry name" value="rSAM"/>
</dbReference>
<dbReference type="PANTHER" id="PTHR42836">
    <property type="entry name" value="7-CARBOXY-7-DEAZAGUANINE SYNTHASE"/>
    <property type="match status" value="1"/>
</dbReference>
<dbReference type="PANTHER" id="PTHR42836:SF1">
    <property type="entry name" value="7-CARBOXY-7-DEAZAGUANINE SYNTHASE"/>
    <property type="match status" value="1"/>
</dbReference>
<dbReference type="Pfam" id="PF13353">
    <property type="entry name" value="Fer4_12"/>
    <property type="match status" value="1"/>
</dbReference>
<dbReference type="PIRSF" id="PIRSF000370">
    <property type="entry name" value="QueE"/>
    <property type="match status" value="1"/>
</dbReference>
<dbReference type="SFLD" id="SFLDS00029">
    <property type="entry name" value="Radical_SAM"/>
    <property type="match status" value="1"/>
</dbReference>
<dbReference type="PROSITE" id="PS51918">
    <property type="entry name" value="RADICAL_SAM"/>
    <property type="match status" value="1"/>
</dbReference>
<organism>
    <name type="scientific">Leptospira interrogans serogroup Icterohaemorrhagiae serovar Lai (strain 56601)</name>
    <dbReference type="NCBI Taxonomy" id="189518"/>
    <lineage>
        <taxon>Bacteria</taxon>
        <taxon>Pseudomonadati</taxon>
        <taxon>Spirochaetota</taxon>
        <taxon>Spirochaetia</taxon>
        <taxon>Leptospirales</taxon>
        <taxon>Leptospiraceae</taxon>
        <taxon>Leptospira</taxon>
    </lineage>
</organism>
<proteinExistence type="inferred from homology"/>
<accession>Q8EZ24</accession>
<sequence>MDNLKTSVHEIYLSLSGEGISTGIPTIFVRMAGCSLRCGMTVGRKLWCDTPYALSPKAGEEMSVNQVLDKIQELSAVNIQILLTGGEPLEGRNREFSITLGNEIFRIRNSSGFYPRPRVETNGAESIEGMDQFVFTLDYKLPGSGMEDRMNLKNLEIYKERKNPLDEIKFVIRDKNDFERCLEIIEKHALVGNLLASPVQGELSPEILAEWIKYSLGSGLRLSIQTHKYIWGDQRGV</sequence>